<comment type="function">
    <text evidence="1">Scaffold protein which forms a transitory spherical honeycomb lattice providing curvature and rigidity to the convex membrane of crescent and immature virions (IV). This association occurs concomitantly with viral membrane formation. Targeted by the drug rifampicin, which prevents the formation of this lattice, and hence virus morphogenesis. In the presence of rifampicin, irregularly shaped membranes that lack the honeycomb layer accumulate around areas of electron-dense viroplasm. This layer is lost from virions during maturation from IV to mature virion (MV), through the proteolysis of A17 N-terminus (By similarity).</text>
</comment>
<comment type="subunit">
    <text evidence="1">Homotrimer (By similarity). Self-assembles to form a layer. Interacts with A17 (via N-terminus); this interaction is necessary for D13 association with membranes (By similarity).</text>
</comment>
<comment type="subcellular location">
    <subcellularLocation>
        <location>Membrane</location>
        <topology>Peripheral membrane protein</topology>
    </subcellularLocation>
    <text evidence="1">Associates transitorily with crescent and IV membranes.</text>
</comment>
<comment type="miscellaneous">
    <text>Displays structure similarities to capsid proteins.</text>
</comment>
<comment type="similarity">
    <text evidence="2">Belongs to the poxviridae protein D13 family.</text>
</comment>
<dbReference type="EMBL" id="AJ005163">
    <property type="protein sequence ID" value="CAA06403.1"/>
    <property type="molecule type" value="Genomic_DNA"/>
</dbReference>
<dbReference type="EMBL" id="AJ581527">
    <property type="protein sequence ID" value="CAE52596.1"/>
    <property type="molecule type" value="Genomic_DNA"/>
</dbReference>
<dbReference type="PIR" id="S42253">
    <property type="entry name" value="S42253"/>
</dbReference>
<dbReference type="RefSeq" id="NP_597675.1">
    <property type="nucleotide sequence ID" value="NC_002188.1"/>
</dbReference>
<dbReference type="SMR" id="P0DTA6"/>
<dbReference type="OrthoDB" id="2466at10239"/>
<dbReference type="Proteomes" id="UP000150838">
    <property type="component" value="Segment"/>
</dbReference>
<dbReference type="GO" id="GO:0016020">
    <property type="term" value="C:membrane"/>
    <property type="evidence" value="ECO:0007669"/>
    <property type="project" value="UniProtKB-SubCell"/>
</dbReference>
<dbReference type="GO" id="GO:0046677">
    <property type="term" value="P:response to antibiotic"/>
    <property type="evidence" value="ECO:0007669"/>
    <property type="project" value="InterPro"/>
</dbReference>
<dbReference type="Gene3D" id="2.70.9.10">
    <property type="entry name" value="Adenovirus Type 2 Hexon, domain 4"/>
    <property type="match status" value="1"/>
</dbReference>
<dbReference type="InterPro" id="IPR005008">
    <property type="entry name" value="Poxvirus_Rif-R"/>
</dbReference>
<dbReference type="Pfam" id="PF03340">
    <property type="entry name" value="Pox_Rif"/>
    <property type="match status" value="1"/>
</dbReference>
<accession>P0DTA6</accession>
<accession>O72909</accession>
<accession>Q70HA0</accession>
<accession>Q9J5F4</accession>
<protein>
    <recommendedName>
        <fullName>Scaffold protein</fullName>
    </recommendedName>
    <alternativeName>
        <fullName>62 kDa protein</fullName>
    </alternativeName>
    <alternativeName>
        <fullName>D13 ortholog</fullName>
    </alternativeName>
    <alternativeName>
        <fullName>N3L protein</fullName>
    </alternativeName>
    <alternativeName>
        <fullName>Rifampicin resistance protein</fullName>
    </alternativeName>
</protein>
<name>D13_FOWPV</name>
<proteinExistence type="inferred from homology"/>
<reference key="1">
    <citation type="submission" date="1998-05" db="EMBL/GenBank/DDBJ databases">
        <authorList>
            <person name="Skinner M.A."/>
        </authorList>
    </citation>
    <scope>NUCLEOTIDE SEQUENCE [GENOMIC DNA]</scope>
    <source>
        <strain>FP-9 / Isolate HP-440</strain>
    </source>
</reference>
<reference key="2">
    <citation type="journal article" date="1990" name="J. Gen. Virol.">
        <title>Analysis of the fowlpox virus genome region corresponding to the vaccinia virus D6 to A1 region: location of, and variation in, non-essential genes in poxviruses.</title>
        <authorList>
            <person name="Binns M.M."/>
            <person name="Britton B.S."/>
            <person name="Mason C."/>
            <person name="Boursnell M.E.G."/>
        </authorList>
    </citation>
    <scope>NUCLEOTIDE SEQUENCE [GENOMIC DNA]</scope>
</reference>
<reference key="3">
    <citation type="journal article" date="2004" name="J. Gen. Virol.">
        <title>Comparison of the genome sequence of FP9, an attenuated, tissue culture-adapted European fowlpox virus, with those of virulent American and European viruses.</title>
        <authorList>
            <person name="Skinner M.A."/>
            <person name="Laidlaw S.M."/>
        </authorList>
    </citation>
    <scope>NUCLEOTIDE SEQUENCE [GENOMIC DNA]</scope>
    <source>
        <strain>FP-9 / Isolate HP1-438 Munich</strain>
    </source>
</reference>
<keyword id="KW-0472">Membrane</keyword>
<sequence length="552" mass="62413">MNNSIISSVINSIDSSSKRTNIFSFDVQQPTAYMPQYISVNGYHNKKDNDANQVCSVSFDIRDQHIAAINYFFISIQLPEVSGEGKFAYVPYVGYKCIQHVAITCGDITIWETDGEELFDKCVDDKIASLSGYSPELNDISTGYTPNDTIKDPTTLYVYIKSPFDADKTISSLKLVNNKITVTITFRSINDVIVYDSKFQVERFVKDFVYSTELHLIAYAVSDIKPKSAYIELDRRVVSCSSTPTPIPVISDVYACTAMSVYVKPYYGMMENKFISYPGYKQTESDYVRCMVNRLLDDLVVVADTVPKGFPSTATFVKVPVDGQINLQDVDIIVKIDNVPDDKDIYYHTNLLIFGTRKNSFVYNISKKFSSIIGMYSPNTDSINFSKVNHTISITDASIPVSFWVSQKNVYQGDNRSNYSKSKDLVVNDPFRKGIDMVNKTDVISRLEVRFGNDPIYSEISPITKVFNMLLTGSSINMRKIIFNMNPANIFRPTTLNANTKRGKDKLTVRISYIDTDPNNPIHYVAKQLVVICTDLYRIDYDGNINITKITE</sequence>
<organism>
    <name type="scientific">Fowlpox virus</name>
    <name type="common">FPV</name>
    <dbReference type="NCBI Taxonomy" id="10261"/>
    <lineage>
        <taxon>Viruses</taxon>
        <taxon>Varidnaviria</taxon>
        <taxon>Bamfordvirae</taxon>
        <taxon>Nucleocytoviricota</taxon>
        <taxon>Pokkesviricetes</taxon>
        <taxon>Chitovirales</taxon>
        <taxon>Poxviridae</taxon>
        <taxon>Chordopoxvirinae</taxon>
        <taxon>Avipoxvirus</taxon>
    </lineage>
</organism>
<feature type="chain" id="PRO_0000448406" description="Scaffold protein">
    <location>
        <begin position="1"/>
        <end position="552"/>
    </location>
</feature>
<organismHost>
    <name type="scientific">Vertebrata</name>
    <dbReference type="NCBI Taxonomy" id="7742"/>
</organismHost>
<gene>
    <name type="ordered locus">FPV050</name>
    <name type="ordered locus">fp9.050</name>
    <name type="ORF">FP-D13</name>
    <name type="ORF">FPD13</name>
</gene>
<evidence type="ECO:0000250" key="1"/>
<evidence type="ECO:0000305" key="2"/>